<proteinExistence type="inferred from homology"/>
<protein>
    <recommendedName>
        <fullName evidence="2">DnaA regulatory inactivator Hda</fullName>
    </recommendedName>
</protein>
<sequence>MNTPAQLSLPLYLPDDETFASFWPGDNSSLLAALQNVLRQEHSGYIYLWAREGAGRSHLLHAACAELSQRGDAVGYVPLDKRTWFVPEVLDGMEHLSLVCIDNIECIAGDELWEMAIFDLYNRILESGKTRLLITGDRPPRQLNLGLPDLASRLDWGQIYKLQPLSDEDKLQALQLRARLRGFELPEDVGRFLLKRLDREMRTLFMTLDQLDRASITAQRKLTIPFVKEILKL</sequence>
<feature type="chain" id="PRO_1000137812" description="DnaA regulatory inactivator Hda">
    <location>
        <begin position="1"/>
        <end position="233"/>
    </location>
</feature>
<keyword id="KW-0235">DNA replication</keyword>
<keyword id="KW-0236">DNA replication inhibitor</keyword>
<gene>
    <name evidence="2" type="primary">hda</name>
    <name type="ordered locus">ECUMN_2809</name>
</gene>
<reference key="1">
    <citation type="journal article" date="2009" name="PLoS Genet.">
        <title>Organised genome dynamics in the Escherichia coli species results in highly diverse adaptive paths.</title>
        <authorList>
            <person name="Touchon M."/>
            <person name="Hoede C."/>
            <person name="Tenaillon O."/>
            <person name="Barbe V."/>
            <person name="Baeriswyl S."/>
            <person name="Bidet P."/>
            <person name="Bingen E."/>
            <person name="Bonacorsi S."/>
            <person name="Bouchier C."/>
            <person name="Bouvet O."/>
            <person name="Calteau A."/>
            <person name="Chiapello H."/>
            <person name="Clermont O."/>
            <person name="Cruveiller S."/>
            <person name="Danchin A."/>
            <person name="Diard M."/>
            <person name="Dossat C."/>
            <person name="Karoui M.E."/>
            <person name="Frapy E."/>
            <person name="Garry L."/>
            <person name="Ghigo J.M."/>
            <person name="Gilles A.M."/>
            <person name="Johnson J."/>
            <person name="Le Bouguenec C."/>
            <person name="Lescat M."/>
            <person name="Mangenot S."/>
            <person name="Martinez-Jehanne V."/>
            <person name="Matic I."/>
            <person name="Nassif X."/>
            <person name="Oztas S."/>
            <person name="Petit M.A."/>
            <person name="Pichon C."/>
            <person name="Rouy Z."/>
            <person name="Ruf C.S."/>
            <person name="Schneider D."/>
            <person name="Tourret J."/>
            <person name="Vacherie B."/>
            <person name="Vallenet D."/>
            <person name="Medigue C."/>
            <person name="Rocha E.P.C."/>
            <person name="Denamur E."/>
        </authorList>
    </citation>
    <scope>NUCLEOTIDE SEQUENCE [LARGE SCALE GENOMIC DNA]</scope>
    <source>
        <strain>UMN026 / ExPEC</strain>
    </source>
</reference>
<organism>
    <name type="scientific">Escherichia coli O17:K52:H18 (strain UMN026 / ExPEC)</name>
    <dbReference type="NCBI Taxonomy" id="585056"/>
    <lineage>
        <taxon>Bacteria</taxon>
        <taxon>Pseudomonadati</taxon>
        <taxon>Pseudomonadota</taxon>
        <taxon>Gammaproteobacteria</taxon>
        <taxon>Enterobacterales</taxon>
        <taxon>Enterobacteriaceae</taxon>
        <taxon>Escherichia</taxon>
    </lineage>
</organism>
<dbReference type="EMBL" id="CU928163">
    <property type="protein sequence ID" value="CAR13987.1"/>
    <property type="status" value="ALT_INIT"/>
    <property type="molecule type" value="Genomic_DNA"/>
</dbReference>
<dbReference type="RefSeq" id="WP_001307333.1">
    <property type="nucleotide sequence ID" value="NC_011751.1"/>
</dbReference>
<dbReference type="SMR" id="B7N678"/>
<dbReference type="STRING" id="585056.ECUMN_2809"/>
<dbReference type="KEGG" id="eum:ECUMN_2809"/>
<dbReference type="PATRIC" id="fig|585056.7.peg.2994"/>
<dbReference type="HOGENOM" id="CLU_072265_1_1_6"/>
<dbReference type="Proteomes" id="UP000007097">
    <property type="component" value="Chromosome"/>
</dbReference>
<dbReference type="GO" id="GO:0006270">
    <property type="term" value="P:DNA replication initiation"/>
    <property type="evidence" value="ECO:0007669"/>
    <property type="project" value="TreeGrafter"/>
</dbReference>
<dbReference type="GO" id="GO:0032297">
    <property type="term" value="P:negative regulation of DNA-templated DNA replication initiation"/>
    <property type="evidence" value="ECO:0007669"/>
    <property type="project" value="InterPro"/>
</dbReference>
<dbReference type="FunFam" id="1.10.8.60:FF:000024">
    <property type="entry name" value="DnaA regulatory inactivator Hda"/>
    <property type="match status" value="1"/>
</dbReference>
<dbReference type="FunFam" id="3.40.50.300:FF:000452">
    <property type="entry name" value="DnaA regulatory inactivator Hda"/>
    <property type="match status" value="1"/>
</dbReference>
<dbReference type="Gene3D" id="1.10.8.60">
    <property type="match status" value="1"/>
</dbReference>
<dbReference type="Gene3D" id="3.40.50.300">
    <property type="entry name" value="P-loop containing nucleotide triphosphate hydrolases"/>
    <property type="match status" value="1"/>
</dbReference>
<dbReference type="HAMAP" id="MF_01158">
    <property type="entry name" value="Hda"/>
    <property type="match status" value="1"/>
</dbReference>
<dbReference type="InterPro" id="IPR020591">
    <property type="entry name" value="Chromosome_initiator_DnaA-like"/>
</dbReference>
<dbReference type="InterPro" id="IPR013317">
    <property type="entry name" value="DnaA_dom"/>
</dbReference>
<dbReference type="InterPro" id="IPR017788">
    <property type="entry name" value="Hda"/>
</dbReference>
<dbReference type="InterPro" id="IPR022864">
    <property type="entry name" value="Hda_Enterobact"/>
</dbReference>
<dbReference type="InterPro" id="IPR055199">
    <property type="entry name" value="Hda_lid"/>
</dbReference>
<dbReference type="InterPro" id="IPR027417">
    <property type="entry name" value="P-loop_NTPase"/>
</dbReference>
<dbReference type="NCBIfam" id="TIGR03420">
    <property type="entry name" value="DnaA_homol_Hda"/>
    <property type="match status" value="1"/>
</dbReference>
<dbReference type="NCBIfam" id="NF005982">
    <property type="entry name" value="PRK08084.1"/>
    <property type="match status" value="1"/>
</dbReference>
<dbReference type="PANTHER" id="PTHR30050">
    <property type="entry name" value="CHROMOSOMAL REPLICATION INITIATOR PROTEIN DNAA"/>
    <property type="match status" value="1"/>
</dbReference>
<dbReference type="PANTHER" id="PTHR30050:SF5">
    <property type="entry name" value="DNAA REGULATORY INACTIVATOR HDA"/>
    <property type="match status" value="1"/>
</dbReference>
<dbReference type="Pfam" id="PF00308">
    <property type="entry name" value="Bac_DnaA"/>
    <property type="match status" value="1"/>
</dbReference>
<dbReference type="Pfam" id="PF22688">
    <property type="entry name" value="Hda_lid"/>
    <property type="match status" value="1"/>
</dbReference>
<dbReference type="PRINTS" id="PR00051">
    <property type="entry name" value="DNAA"/>
</dbReference>
<dbReference type="SUPFAM" id="SSF52540">
    <property type="entry name" value="P-loop containing nucleoside triphosphate hydrolases"/>
    <property type="match status" value="1"/>
</dbReference>
<evidence type="ECO:0000250" key="1"/>
<evidence type="ECO:0000255" key="2">
    <source>
        <dbReference type="HAMAP-Rule" id="MF_01158"/>
    </source>
</evidence>
<evidence type="ECO:0000305" key="3"/>
<name>HDA_ECOLU</name>
<comment type="function">
    <text evidence="1">Mediates the interaction of DNA replication initiator protein DnaA with DNA polymerase subunit beta sliding clamp (dnaN). Stimulates hydrolysis of ATP-DnaA to ADP-DnaA, rendering DnaA inactive for reinitiation, a process called regulatory inhibition of DnaA or RIDA (By similarity).</text>
</comment>
<comment type="subunit">
    <text evidence="2">The active form seems to be an ADP-bound monomer. Forms the RIDA complex (regulatory inactivation of DnaA) of ATP-DnaA, ADP-Hda and the DNA-loaded beta sliding clamp (dnaN).</text>
</comment>
<comment type="similarity">
    <text evidence="2">Belongs to the DnaA family. HdA subfamily.</text>
</comment>
<comment type="sequence caution" evidence="3">
    <conflict type="erroneous initiation">
        <sequence resource="EMBL-CDS" id="CAR13987"/>
    </conflict>
</comment>
<accession>B7N678</accession>